<geneLocation type="mitochondrion" evidence="5"/>
<proteinExistence type="inferred from homology"/>
<sequence>NNFFQGYNLLFQHSLFASYMDWFHAFNCSLLLGVLVFVTLLFGYLIFSTFYFKSKKIEYQFGELLCSIFPTIILLMQMVPSLSLLYYYGLMNLDSNLTVKVTGHQWYWSYEYSDIPGLEFDSYMKSLDQLNLGEPRLLEVDNRCVIPCDTNIRFCITSADVIHAWALNSLSVKLDAMSGILSTFSYSFPMVGVFYGQCSEICGANHSFMPIALEVTLLDNFKSWCFGTME</sequence>
<evidence type="ECO:0000250" key="1">
    <source>
        <dbReference type="UniProtKB" id="P00410"/>
    </source>
</evidence>
<evidence type="ECO:0000255" key="2"/>
<evidence type="ECO:0000269" key="3">
    <source>
    </source>
</evidence>
<evidence type="ECO:0000305" key="4"/>
<evidence type="ECO:0000312" key="5">
    <source>
        <dbReference type="EMBL" id="AAM09710.1"/>
    </source>
</evidence>
<protein>
    <recommendedName>
        <fullName>Cytochrome c oxidase subunit 2</fullName>
        <ecNumber>7.1.1.9</ecNumber>
    </recommendedName>
    <alternativeName>
        <fullName>Cytochrome c oxidase polypeptide II</fullName>
    </alternativeName>
</protein>
<feature type="chain" id="PRO_0000183527" description="Cytochrome c oxidase subunit 2">
    <location>
        <begin position="1" status="less than"/>
        <end position="230"/>
    </location>
</feature>
<feature type="topological domain" description="Mitochondrial intermembrane" evidence="2">
    <location>
        <begin position="1" status="less than"/>
        <end position="29"/>
    </location>
</feature>
<feature type="transmembrane region" description="Helical" evidence="2">
    <location>
        <begin position="30"/>
        <end position="50"/>
    </location>
</feature>
<feature type="topological domain" description="Mitochondrial matrix" evidence="2">
    <location>
        <begin position="51"/>
        <end position="63"/>
    </location>
</feature>
<feature type="transmembrane region" description="Helical" evidence="2">
    <location>
        <begin position="64"/>
        <end position="84"/>
    </location>
</feature>
<feature type="topological domain" description="Mitochondrial intermembrane" evidence="2">
    <location>
        <begin position="85"/>
        <end position="230"/>
    </location>
</feature>
<feature type="binding site" evidence="1">
    <location>
        <position position="163"/>
    </location>
    <ligand>
        <name>Cu cation</name>
        <dbReference type="ChEBI" id="CHEBI:23378"/>
        <label>A1</label>
    </ligand>
</feature>
<feature type="binding site" evidence="1">
    <location>
        <position position="198"/>
    </location>
    <ligand>
        <name>Cu cation</name>
        <dbReference type="ChEBI" id="CHEBI:23378"/>
        <label>A1</label>
    </ligand>
</feature>
<feature type="binding site" evidence="1">
    <location>
        <position position="198"/>
    </location>
    <ligand>
        <name>Cu cation</name>
        <dbReference type="ChEBI" id="CHEBI:23378"/>
        <label>A2</label>
    </ligand>
</feature>
<feature type="binding site" evidence="1">
    <location>
        <position position="200"/>
    </location>
    <ligand>
        <name>Cu cation</name>
        <dbReference type="ChEBI" id="CHEBI:23378"/>
        <label>A2</label>
    </ligand>
</feature>
<feature type="binding site" evidence="1">
    <location>
        <position position="200"/>
    </location>
    <ligand>
        <name>Mg(2+)</name>
        <dbReference type="ChEBI" id="CHEBI:18420"/>
        <note>ligand shared with subunit 1</note>
    </ligand>
</feature>
<feature type="binding site" evidence="1">
    <location>
        <position position="202"/>
    </location>
    <ligand>
        <name>Cu cation</name>
        <dbReference type="ChEBI" id="CHEBI:23378"/>
        <label>A1</label>
    </ligand>
</feature>
<feature type="binding site" evidence="1">
    <location>
        <position position="202"/>
    </location>
    <ligand>
        <name>Cu cation</name>
        <dbReference type="ChEBI" id="CHEBI:23378"/>
        <label>A2</label>
    </ligand>
</feature>
<feature type="binding site" evidence="1">
    <location>
        <position position="206"/>
    </location>
    <ligand>
        <name>Cu cation</name>
        <dbReference type="ChEBI" id="CHEBI:23378"/>
        <label>A2</label>
    </ligand>
</feature>
<feature type="binding site" evidence="1">
    <location>
        <position position="209"/>
    </location>
    <ligand>
        <name>Cu cation</name>
        <dbReference type="ChEBI" id="CHEBI:23378"/>
        <label>A1</label>
    </ligand>
</feature>
<feature type="sequence variant" description="In strain: SB146." evidence="3">
    <original>V</original>
    <variation>I</variation>
    <location>
        <position position="79"/>
    </location>
</feature>
<feature type="non-terminal residue" evidence="5">
    <location>
        <position position="1"/>
    </location>
</feature>
<accession>Q8SEM9</accession>
<accession>Q8SEN9</accession>
<accession>Q8SFX5</accession>
<name>COX2_CAERE</name>
<comment type="function">
    <text evidence="1">Component of the cytochrome c oxidase, the last enzyme in the mitochondrial electron transport chain which drives oxidative phosphorylation. The respiratory chain contains 3 multisubunit complexes succinate dehydrogenase (complex II, CII), ubiquinol-cytochrome c oxidoreductase (cytochrome b-c1 complex, complex III, CIII) and cytochrome c oxidase (complex IV, CIV), that cooperate to transfer electrons derived from NADH and succinate to molecular oxygen, creating an electrochemical gradient over the inner membrane that drives transmembrane transport and the ATP synthase. Cytochrome c oxidase is the component of the respiratory chain that catalyzes the reduction of oxygen to water. Electrons originating from reduced cytochrome c in the intermembrane space (IMS) are transferred via the dinuclear copper A center (CU(A)) of subunit 2 and heme A of subunit 1 to the active site in subunit 1, a binuclear center (BNC) formed by heme A3 and copper B (CU(B)). The BNC reduces molecular oxygen to 2 water molecules using 4 electrons from cytochrome c in the IMS and 4 protons from the mitochondrial matrix.</text>
</comment>
<comment type="catalytic activity">
    <reaction evidence="1">
        <text>4 Fe(II)-[cytochrome c] + O2 + 8 H(+)(in) = 4 Fe(III)-[cytochrome c] + 2 H2O + 4 H(+)(out)</text>
        <dbReference type="Rhea" id="RHEA:11436"/>
        <dbReference type="Rhea" id="RHEA-COMP:10350"/>
        <dbReference type="Rhea" id="RHEA-COMP:14399"/>
        <dbReference type="ChEBI" id="CHEBI:15377"/>
        <dbReference type="ChEBI" id="CHEBI:15378"/>
        <dbReference type="ChEBI" id="CHEBI:15379"/>
        <dbReference type="ChEBI" id="CHEBI:29033"/>
        <dbReference type="ChEBI" id="CHEBI:29034"/>
        <dbReference type="EC" id="7.1.1.9"/>
    </reaction>
    <physiologicalReaction direction="left-to-right" evidence="1">
        <dbReference type="Rhea" id="RHEA:11437"/>
    </physiologicalReaction>
</comment>
<comment type="cofactor">
    <cofactor evidence="1">
        <name>Cu cation</name>
        <dbReference type="ChEBI" id="CHEBI:23378"/>
    </cofactor>
    <text evidence="1">Binds a dinuclear copper A center per subunit.</text>
</comment>
<comment type="subunit">
    <text evidence="1">Component of the cytochrome c oxidase (complex IV, CIV), a multisubunit enzyme composed of a catalytic core of 3 subunits and several supernumerary subunits. The complex exists as a monomer or a dimer and forms supercomplexes (SCs) in the inner mitochondrial membrane with ubiquinol-cytochrome c oxidoreductase (cytochrome b-c1 complex, complex III, CIII).</text>
</comment>
<comment type="subcellular location">
    <subcellularLocation>
        <location evidence="1">Mitochondrion inner membrane</location>
        <topology evidence="1">Multi-pass membrane protein</topology>
    </subcellularLocation>
</comment>
<comment type="similarity">
    <text evidence="4">Belongs to the cytochrome c oxidase subunit 2 family.</text>
</comment>
<reference evidence="4" key="1">
    <citation type="journal article" date="2002" name="Genetics">
        <title>Levels of DNA polymorphism vary with mating system in the nematode genus Caenorhabditis.</title>
        <authorList>
            <person name="Graustein A."/>
            <person name="Gaspar J.M."/>
            <person name="Walters J.R."/>
            <person name="Palopoli M.F."/>
        </authorList>
    </citation>
    <scope>NUCLEOTIDE SEQUENCE [GENOMIC DNA]</scope>
    <scope>VARIANT ILE-79</scope>
    <source>
        <strain>CR1014</strain>
        <strain>CR1415</strain>
        <strain>CR2124</strain>
        <strain>EM464</strain>
        <strain>PB205</strain>
        <strain>PB206</strain>
        <strain>PB212</strain>
        <strain>PB219</strain>
        <strain>PB228</strain>
        <strain>PB229</strain>
        <strain>SB146</strain>
        <strain>VT733</strain>
    </source>
</reference>
<organism evidence="5">
    <name type="scientific">Caenorhabditis remanei</name>
    <name type="common">Caenorhabditis vulgaris</name>
    <dbReference type="NCBI Taxonomy" id="31234"/>
    <lineage>
        <taxon>Eukaryota</taxon>
        <taxon>Metazoa</taxon>
        <taxon>Ecdysozoa</taxon>
        <taxon>Nematoda</taxon>
        <taxon>Chromadorea</taxon>
        <taxon>Rhabditida</taxon>
        <taxon>Rhabditina</taxon>
        <taxon>Rhabditomorpha</taxon>
        <taxon>Rhabditoidea</taxon>
        <taxon>Rhabditidae</taxon>
        <taxon>Peloderinae</taxon>
        <taxon>Caenorhabditis</taxon>
    </lineage>
</organism>
<keyword id="KW-0186">Copper</keyword>
<keyword id="KW-0249">Electron transport</keyword>
<keyword id="KW-0460">Magnesium</keyword>
<keyword id="KW-0472">Membrane</keyword>
<keyword id="KW-0479">Metal-binding</keyword>
<keyword id="KW-0496">Mitochondrion</keyword>
<keyword id="KW-0999">Mitochondrion inner membrane</keyword>
<keyword id="KW-0679">Respiratory chain</keyword>
<keyword id="KW-1278">Translocase</keyword>
<keyword id="KW-0812">Transmembrane</keyword>
<keyword id="KW-1133">Transmembrane helix</keyword>
<keyword id="KW-0813">Transport</keyword>
<dbReference type="EC" id="7.1.1.9"/>
<dbReference type="EMBL" id="AF491508">
    <property type="protein sequence ID" value="AAM09710.1"/>
    <property type="molecule type" value="Genomic_DNA"/>
</dbReference>
<dbReference type="EMBL" id="AF491509">
    <property type="protein sequence ID" value="AAM09711.1"/>
    <property type="molecule type" value="Genomic_DNA"/>
</dbReference>
<dbReference type="EMBL" id="AF491510">
    <property type="protein sequence ID" value="AAM09712.1"/>
    <property type="molecule type" value="Genomic_DNA"/>
</dbReference>
<dbReference type="EMBL" id="AF491511">
    <property type="protein sequence ID" value="AAM09713.1"/>
    <property type="molecule type" value="Genomic_DNA"/>
</dbReference>
<dbReference type="EMBL" id="AF491512">
    <property type="protein sequence ID" value="AAM09714.1"/>
    <property type="molecule type" value="Genomic_DNA"/>
</dbReference>
<dbReference type="EMBL" id="AF491513">
    <property type="protein sequence ID" value="AAM09715.1"/>
    <property type="molecule type" value="Genomic_DNA"/>
</dbReference>
<dbReference type="EMBL" id="AF491514">
    <property type="protein sequence ID" value="AAM09716.1"/>
    <property type="molecule type" value="Genomic_DNA"/>
</dbReference>
<dbReference type="EMBL" id="AF491515">
    <property type="protein sequence ID" value="AAM09717.1"/>
    <property type="molecule type" value="Genomic_DNA"/>
</dbReference>
<dbReference type="EMBL" id="AF491516">
    <property type="protein sequence ID" value="AAM09718.1"/>
    <property type="molecule type" value="Genomic_DNA"/>
</dbReference>
<dbReference type="EMBL" id="AF491517">
    <property type="protein sequence ID" value="AAM09719.1"/>
    <property type="molecule type" value="Genomic_DNA"/>
</dbReference>
<dbReference type="EMBL" id="AF491518">
    <property type="protein sequence ID" value="AAM09720.1"/>
    <property type="molecule type" value="Genomic_DNA"/>
</dbReference>
<dbReference type="EMBL" id="AF491519">
    <property type="protein sequence ID" value="AAM09721.1"/>
    <property type="molecule type" value="Genomic_DNA"/>
</dbReference>
<dbReference type="SMR" id="Q8SEM9"/>
<dbReference type="GO" id="GO:0005743">
    <property type="term" value="C:mitochondrial inner membrane"/>
    <property type="evidence" value="ECO:0007669"/>
    <property type="project" value="UniProtKB-SubCell"/>
</dbReference>
<dbReference type="GO" id="GO:0005507">
    <property type="term" value="F:copper ion binding"/>
    <property type="evidence" value="ECO:0007669"/>
    <property type="project" value="InterPro"/>
</dbReference>
<dbReference type="GO" id="GO:0004129">
    <property type="term" value="F:cytochrome-c oxidase activity"/>
    <property type="evidence" value="ECO:0007669"/>
    <property type="project" value="UniProtKB-EC"/>
</dbReference>
<dbReference type="GO" id="GO:0042773">
    <property type="term" value="P:ATP synthesis coupled electron transport"/>
    <property type="evidence" value="ECO:0007669"/>
    <property type="project" value="TreeGrafter"/>
</dbReference>
<dbReference type="CDD" id="cd13912">
    <property type="entry name" value="CcO_II_C"/>
    <property type="match status" value="1"/>
</dbReference>
<dbReference type="FunFam" id="2.60.40.420:FF:000001">
    <property type="entry name" value="Cytochrome c oxidase subunit 2"/>
    <property type="match status" value="1"/>
</dbReference>
<dbReference type="Gene3D" id="1.10.287.90">
    <property type="match status" value="1"/>
</dbReference>
<dbReference type="Gene3D" id="2.60.40.420">
    <property type="entry name" value="Cupredoxins - blue copper proteins"/>
    <property type="match status" value="1"/>
</dbReference>
<dbReference type="InterPro" id="IPR045187">
    <property type="entry name" value="CcO_II"/>
</dbReference>
<dbReference type="InterPro" id="IPR002429">
    <property type="entry name" value="CcO_II-like_C"/>
</dbReference>
<dbReference type="InterPro" id="IPR034210">
    <property type="entry name" value="CcO_II_C"/>
</dbReference>
<dbReference type="InterPro" id="IPR001505">
    <property type="entry name" value="Copper_CuA"/>
</dbReference>
<dbReference type="InterPro" id="IPR008972">
    <property type="entry name" value="Cupredoxin"/>
</dbReference>
<dbReference type="InterPro" id="IPR011759">
    <property type="entry name" value="Cyt_c_oxidase_su2_TM_dom"/>
</dbReference>
<dbReference type="InterPro" id="IPR036257">
    <property type="entry name" value="Cyt_c_oxidase_su2_TM_sf"/>
</dbReference>
<dbReference type="PANTHER" id="PTHR22888:SF9">
    <property type="entry name" value="CYTOCHROME C OXIDASE SUBUNIT 2"/>
    <property type="match status" value="1"/>
</dbReference>
<dbReference type="PANTHER" id="PTHR22888">
    <property type="entry name" value="CYTOCHROME C OXIDASE, SUBUNIT II"/>
    <property type="match status" value="1"/>
</dbReference>
<dbReference type="Pfam" id="PF00116">
    <property type="entry name" value="COX2"/>
    <property type="match status" value="1"/>
</dbReference>
<dbReference type="PRINTS" id="PR01166">
    <property type="entry name" value="CYCOXIDASEII"/>
</dbReference>
<dbReference type="SUPFAM" id="SSF49503">
    <property type="entry name" value="Cupredoxins"/>
    <property type="match status" value="1"/>
</dbReference>
<dbReference type="SUPFAM" id="SSF81464">
    <property type="entry name" value="Cytochrome c oxidase subunit II-like, transmembrane region"/>
    <property type="match status" value="1"/>
</dbReference>
<dbReference type="PROSITE" id="PS00078">
    <property type="entry name" value="COX2"/>
    <property type="match status" value="1"/>
</dbReference>
<dbReference type="PROSITE" id="PS50857">
    <property type="entry name" value="COX2_CUA"/>
    <property type="match status" value="1"/>
</dbReference>
<dbReference type="PROSITE" id="PS50999">
    <property type="entry name" value="COX2_TM"/>
    <property type="match status" value="1"/>
</dbReference>
<gene>
    <name type="primary">cox-2</name>
    <name type="synonym">coII</name>
</gene>